<accession>A8MJT0</accession>
<reference key="1">
    <citation type="submission" date="2007-10" db="EMBL/GenBank/DDBJ databases">
        <title>Complete genome of Alkaliphilus oremlandii OhILAs.</title>
        <authorList>
            <person name="Copeland A."/>
            <person name="Lucas S."/>
            <person name="Lapidus A."/>
            <person name="Barry K."/>
            <person name="Detter J.C."/>
            <person name="Glavina del Rio T."/>
            <person name="Hammon N."/>
            <person name="Israni S."/>
            <person name="Dalin E."/>
            <person name="Tice H."/>
            <person name="Pitluck S."/>
            <person name="Chain P."/>
            <person name="Malfatti S."/>
            <person name="Shin M."/>
            <person name="Vergez L."/>
            <person name="Schmutz J."/>
            <person name="Larimer F."/>
            <person name="Land M."/>
            <person name="Hauser L."/>
            <person name="Kyrpides N."/>
            <person name="Mikhailova N."/>
            <person name="Stolz J.F."/>
            <person name="Dawson A."/>
            <person name="Fisher E."/>
            <person name="Crable B."/>
            <person name="Perera E."/>
            <person name="Lisak J."/>
            <person name="Ranganathan M."/>
            <person name="Basu P."/>
            <person name="Richardson P."/>
        </authorList>
    </citation>
    <scope>NUCLEOTIDE SEQUENCE [LARGE SCALE GENOMIC DNA]</scope>
    <source>
        <strain>OhILAs</strain>
    </source>
</reference>
<name>METK_ALKOO</name>
<dbReference type="EC" id="2.5.1.6" evidence="1"/>
<dbReference type="EMBL" id="CP000853">
    <property type="protein sequence ID" value="ABW20062.1"/>
    <property type="molecule type" value="Genomic_DNA"/>
</dbReference>
<dbReference type="RefSeq" id="WP_012160369.1">
    <property type="nucleotide sequence ID" value="NC_009922.1"/>
</dbReference>
<dbReference type="SMR" id="A8MJT0"/>
<dbReference type="STRING" id="350688.Clos_2531"/>
<dbReference type="KEGG" id="aoe:Clos_2531"/>
<dbReference type="eggNOG" id="COG0192">
    <property type="taxonomic scope" value="Bacteria"/>
</dbReference>
<dbReference type="HOGENOM" id="CLU_041802_1_1_9"/>
<dbReference type="OrthoDB" id="9801686at2"/>
<dbReference type="UniPathway" id="UPA00315">
    <property type="reaction ID" value="UER00080"/>
</dbReference>
<dbReference type="Proteomes" id="UP000000269">
    <property type="component" value="Chromosome"/>
</dbReference>
<dbReference type="GO" id="GO:0005737">
    <property type="term" value="C:cytoplasm"/>
    <property type="evidence" value="ECO:0007669"/>
    <property type="project" value="UniProtKB-SubCell"/>
</dbReference>
<dbReference type="GO" id="GO:0005524">
    <property type="term" value="F:ATP binding"/>
    <property type="evidence" value="ECO:0007669"/>
    <property type="project" value="UniProtKB-UniRule"/>
</dbReference>
<dbReference type="GO" id="GO:0000287">
    <property type="term" value="F:magnesium ion binding"/>
    <property type="evidence" value="ECO:0007669"/>
    <property type="project" value="UniProtKB-UniRule"/>
</dbReference>
<dbReference type="GO" id="GO:0004478">
    <property type="term" value="F:methionine adenosyltransferase activity"/>
    <property type="evidence" value="ECO:0007669"/>
    <property type="project" value="UniProtKB-UniRule"/>
</dbReference>
<dbReference type="GO" id="GO:0006730">
    <property type="term" value="P:one-carbon metabolic process"/>
    <property type="evidence" value="ECO:0007669"/>
    <property type="project" value="UniProtKB-KW"/>
</dbReference>
<dbReference type="GO" id="GO:0006556">
    <property type="term" value="P:S-adenosylmethionine biosynthetic process"/>
    <property type="evidence" value="ECO:0007669"/>
    <property type="project" value="UniProtKB-UniRule"/>
</dbReference>
<dbReference type="CDD" id="cd18079">
    <property type="entry name" value="S-AdoMet_synt"/>
    <property type="match status" value="1"/>
</dbReference>
<dbReference type="FunFam" id="3.30.300.10:FF:000003">
    <property type="entry name" value="S-adenosylmethionine synthase"/>
    <property type="match status" value="1"/>
</dbReference>
<dbReference type="Gene3D" id="3.30.300.10">
    <property type="match status" value="3"/>
</dbReference>
<dbReference type="HAMAP" id="MF_00086">
    <property type="entry name" value="S_AdoMet_synth1"/>
    <property type="match status" value="1"/>
</dbReference>
<dbReference type="InterPro" id="IPR022631">
    <property type="entry name" value="ADOMET_SYNTHASE_CS"/>
</dbReference>
<dbReference type="InterPro" id="IPR022630">
    <property type="entry name" value="S-AdoMet_synt_C"/>
</dbReference>
<dbReference type="InterPro" id="IPR022629">
    <property type="entry name" value="S-AdoMet_synt_central"/>
</dbReference>
<dbReference type="InterPro" id="IPR022628">
    <property type="entry name" value="S-AdoMet_synt_N"/>
</dbReference>
<dbReference type="InterPro" id="IPR002133">
    <property type="entry name" value="S-AdoMet_synthetase"/>
</dbReference>
<dbReference type="InterPro" id="IPR022636">
    <property type="entry name" value="S-AdoMet_synthetase_sfam"/>
</dbReference>
<dbReference type="NCBIfam" id="TIGR01034">
    <property type="entry name" value="metK"/>
    <property type="match status" value="1"/>
</dbReference>
<dbReference type="PANTHER" id="PTHR11964">
    <property type="entry name" value="S-ADENOSYLMETHIONINE SYNTHETASE"/>
    <property type="match status" value="1"/>
</dbReference>
<dbReference type="Pfam" id="PF02773">
    <property type="entry name" value="S-AdoMet_synt_C"/>
    <property type="match status" value="1"/>
</dbReference>
<dbReference type="Pfam" id="PF02772">
    <property type="entry name" value="S-AdoMet_synt_M"/>
    <property type="match status" value="1"/>
</dbReference>
<dbReference type="Pfam" id="PF00438">
    <property type="entry name" value="S-AdoMet_synt_N"/>
    <property type="match status" value="1"/>
</dbReference>
<dbReference type="PIRSF" id="PIRSF000497">
    <property type="entry name" value="MAT"/>
    <property type="match status" value="1"/>
</dbReference>
<dbReference type="SUPFAM" id="SSF55973">
    <property type="entry name" value="S-adenosylmethionine synthetase"/>
    <property type="match status" value="3"/>
</dbReference>
<dbReference type="PROSITE" id="PS00376">
    <property type="entry name" value="ADOMET_SYNTHASE_1"/>
    <property type="match status" value="1"/>
</dbReference>
<dbReference type="PROSITE" id="PS00377">
    <property type="entry name" value="ADOMET_SYNTHASE_2"/>
    <property type="match status" value="1"/>
</dbReference>
<keyword id="KW-0067">ATP-binding</keyword>
<keyword id="KW-0963">Cytoplasm</keyword>
<keyword id="KW-0460">Magnesium</keyword>
<keyword id="KW-0479">Metal-binding</keyword>
<keyword id="KW-0547">Nucleotide-binding</keyword>
<keyword id="KW-0554">One-carbon metabolism</keyword>
<keyword id="KW-0630">Potassium</keyword>
<keyword id="KW-1185">Reference proteome</keyword>
<keyword id="KW-0808">Transferase</keyword>
<sequence length="395" mass="42701">MFKKLFTSESVTEGHPDKMCDQISDAILDAILEKDPAARVACETSVSTGLVLVAGEITTKCYVDIPKIVRKTIEEIGYTRAKYGFDSDTCAVLTAINEQSADIALGVDEALESKKGEHRDELEAIGAGDQGIMFGFACNETPELMPLPISLAHKLAKRLSDVRKDGTIGYLRPDGKTQVTVEYDGDKPVRVDTIVISTQHGPEVDAATIEKDMIEHVVQKIVPAELLDENTRYFINPTGRFVIGGPQGDAGLTGRKIIVDTYGGYARHGGGAFSGKDATKVDRSAAYAARYVAKNIVAAGLADKCEIELAYAIGVSRPISILVETFGTGKIAEADIAELIGKHFDLRPAAIIRDLGLRNPGYRNVAAYGHFGRADLDLTWERTDKAELLRKEAGL</sequence>
<organism>
    <name type="scientific">Alkaliphilus oremlandii (strain OhILAs)</name>
    <name type="common">Clostridium oremlandii (strain OhILAs)</name>
    <dbReference type="NCBI Taxonomy" id="350688"/>
    <lineage>
        <taxon>Bacteria</taxon>
        <taxon>Bacillati</taxon>
        <taxon>Bacillota</taxon>
        <taxon>Clostridia</taxon>
        <taxon>Peptostreptococcales</taxon>
        <taxon>Natronincolaceae</taxon>
        <taxon>Alkaliphilus</taxon>
    </lineage>
</organism>
<evidence type="ECO:0000255" key="1">
    <source>
        <dbReference type="HAMAP-Rule" id="MF_00086"/>
    </source>
</evidence>
<protein>
    <recommendedName>
        <fullName evidence="1">S-adenosylmethionine synthase</fullName>
        <shortName evidence="1">AdoMet synthase</shortName>
        <ecNumber evidence="1">2.5.1.6</ecNumber>
    </recommendedName>
    <alternativeName>
        <fullName evidence="1">MAT</fullName>
    </alternativeName>
    <alternativeName>
        <fullName evidence="1">Methionine adenosyltransferase</fullName>
    </alternativeName>
</protein>
<proteinExistence type="inferred from homology"/>
<gene>
    <name evidence="1" type="primary">metK</name>
    <name type="ordered locus">Clos_2531</name>
</gene>
<feature type="chain" id="PRO_1000057556" description="S-adenosylmethionine synthase">
    <location>
        <begin position="1"/>
        <end position="395"/>
    </location>
</feature>
<feature type="region of interest" description="Flexible loop" evidence="1">
    <location>
        <begin position="99"/>
        <end position="109"/>
    </location>
</feature>
<feature type="binding site" description="in other chain" evidence="1">
    <location>
        <position position="15"/>
    </location>
    <ligand>
        <name>ATP</name>
        <dbReference type="ChEBI" id="CHEBI:30616"/>
        <note>ligand shared between two neighboring subunits</note>
    </ligand>
</feature>
<feature type="binding site" evidence="1">
    <location>
        <position position="17"/>
    </location>
    <ligand>
        <name>Mg(2+)</name>
        <dbReference type="ChEBI" id="CHEBI:18420"/>
    </ligand>
</feature>
<feature type="binding site" evidence="1">
    <location>
        <position position="43"/>
    </location>
    <ligand>
        <name>K(+)</name>
        <dbReference type="ChEBI" id="CHEBI:29103"/>
    </ligand>
</feature>
<feature type="binding site" description="in other chain" evidence="1">
    <location>
        <position position="56"/>
    </location>
    <ligand>
        <name>L-methionine</name>
        <dbReference type="ChEBI" id="CHEBI:57844"/>
        <note>ligand shared between two neighboring subunits</note>
    </ligand>
</feature>
<feature type="binding site" description="in other chain" evidence="1">
    <location>
        <position position="99"/>
    </location>
    <ligand>
        <name>L-methionine</name>
        <dbReference type="ChEBI" id="CHEBI:57844"/>
        <note>ligand shared between two neighboring subunits</note>
    </ligand>
</feature>
<feature type="binding site" description="in other chain" evidence="1">
    <location>
        <begin position="174"/>
        <end position="176"/>
    </location>
    <ligand>
        <name>ATP</name>
        <dbReference type="ChEBI" id="CHEBI:30616"/>
        <note>ligand shared between two neighboring subunits</note>
    </ligand>
</feature>
<feature type="binding site" description="in other chain" evidence="1">
    <location>
        <begin position="240"/>
        <end position="241"/>
    </location>
    <ligand>
        <name>ATP</name>
        <dbReference type="ChEBI" id="CHEBI:30616"/>
        <note>ligand shared between two neighboring subunits</note>
    </ligand>
</feature>
<feature type="binding site" evidence="1">
    <location>
        <position position="249"/>
    </location>
    <ligand>
        <name>ATP</name>
        <dbReference type="ChEBI" id="CHEBI:30616"/>
        <note>ligand shared between two neighboring subunits</note>
    </ligand>
</feature>
<feature type="binding site" evidence="1">
    <location>
        <position position="249"/>
    </location>
    <ligand>
        <name>L-methionine</name>
        <dbReference type="ChEBI" id="CHEBI:57844"/>
        <note>ligand shared between two neighboring subunits</note>
    </ligand>
</feature>
<feature type="binding site" description="in other chain" evidence="1">
    <location>
        <begin position="255"/>
        <end position="256"/>
    </location>
    <ligand>
        <name>ATP</name>
        <dbReference type="ChEBI" id="CHEBI:30616"/>
        <note>ligand shared between two neighboring subunits</note>
    </ligand>
</feature>
<feature type="binding site" evidence="1">
    <location>
        <position position="272"/>
    </location>
    <ligand>
        <name>ATP</name>
        <dbReference type="ChEBI" id="CHEBI:30616"/>
        <note>ligand shared between two neighboring subunits</note>
    </ligand>
</feature>
<feature type="binding site" evidence="1">
    <location>
        <position position="276"/>
    </location>
    <ligand>
        <name>ATP</name>
        <dbReference type="ChEBI" id="CHEBI:30616"/>
        <note>ligand shared between two neighboring subunits</note>
    </ligand>
</feature>
<feature type="binding site" description="in other chain" evidence="1">
    <location>
        <position position="280"/>
    </location>
    <ligand>
        <name>L-methionine</name>
        <dbReference type="ChEBI" id="CHEBI:57844"/>
        <note>ligand shared between two neighboring subunits</note>
    </ligand>
</feature>
<comment type="function">
    <text evidence="1">Catalyzes the formation of S-adenosylmethionine (AdoMet) from methionine and ATP. The overall synthetic reaction is composed of two sequential steps, AdoMet formation and the subsequent tripolyphosphate hydrolysis which occurs prior to release of AdoMet from the enzyme.</text>
</comment>
<comment type="catalytic activity">
    <reaction evidence="1">
        <text>L-methionine + ATP + H2O = S-adenosyl-L-methionine + phosphate + diphosphate</text>
        <dbReference type="Rhea" id="RHEA:21080"/>
        <dbReference type="ChEBI" id="CHEBI:15377"/>
        <dbReference type="ChEBI" id="CHEBI:30616"/>
        <dbReference type="ChEBI" id="CHEBI:33019"/>
        <dbReference type="ChEBI" id="CHEBI:43474"/>
        <dbReference type="ChEBI" id="CHEBI:57844"/>
        <dbReference type="ChEBI" id="CHEBI:59789"/>
        <dbReference type="EC" id="2.5.1.6"/>
    </reaction>
</comment>
<comment type="cofactor">
    <cofactor evidence="1">
        <name>Mg(2+)</name>
        <dbReference type="ChEBI" id="CHEBI:18420"/>
    </cofactor>
    <text evidence="1">Binds 2 divalent ions per subunit.</text>
</comment>
<comment type="cofactor">
    <cofactor evidence="1">
        <name>K(+)</name>
        <dbReference type="ChEBI" id="CHEBI:29103"/>
    </cofactor>
    <text evidence="1">Binds 1 potassium ion per subunit.</text>
</comment>
<comment type="pathway">
    <text evidence="1">Amino-acid biosynthesis; S-adenosyl-L-methionine biosynthesis; S-adenosyl-L-methionine from L-methionine: step 1/1.</text>
</comment>
<comment type="subunit">
    <text evidence="1">Homotetramer; dimer of dimers.</text>
</comment>
<comment type="subcellular location">
    <subcellularLocation>
        <location evidence="1">Cytoplasm</location>
    </subcellularLocation>
</comment>
<comment type="similarity">
    <text evidence="1">Belongs to the AdoMet synthase family.</text>
</comment>